<feature type="signal peptide" evidence="2">
    <location>
        <begin position="1"/>
        <end position="16"/>
    </location>
</feature>
<feature type="chain" id="PRO_0000429231" description="U15-barytoxin-Tl1c">
    <location>
        <begin position="17"/>
        <end position="120"/>
    </location>
</feature>
<feature type="disulfide bond" evidence="3">
    <location>
        <begin position="55"/>
        <end position="73"/>
    </location>
</feature>
<feature type="disulfide bond" evidence="3">
    <location>
        <begin position="66"/>
        <end position="79"/>
    </location>
</feature>
<feature type="disulfide bond" evidence="3">
    <location>
        <begin position="70"/>
        <end position="118"/>
    </location>
</feature>
<feature type="disulfide bond" evidence="3">
    <location>
        <begin position="72"/>
        <end position="89"/>
    </location>
</feature>
<name>TX33C_TRILK</name>
<sequence length="120" mass="12700">MKLFMVLVASFAFAVALPSKKREETAAENELTGDLQEAAQPMIYAVAFPEIRASCVIGWKQQGATCQRDCECCGVAATCITGDSSTGFCGYHQTPNALGQGILYTADTIKNGFSAIFCAG</sequence>
<protein>
    <recommendedName>
        <fullName evidence="3">U15-barytoxin-Tl1c</fullName>
        <shortName evidence="3">U15-BATX-Tl1c</shortName>
    </recommendedName>
    <alternativeName>
        <fullName evidence="4">Toxin tri-ICK-24</fullName>
    </alternativeName>
</protein>
<accession>W4VSB0</accession>
<reference key="1">
    <citation type="journal article" date="2013" name="Toxins">
        <title>A proteomics and transcriptomics investigation of the venom from the barychelid spider Trittame loki (brush-foot trapdoor).</title>
        <authorList>
            <person name="Undheim E.A."/>
            <person name="Sunagar K."/>
            <person name="Herzig V."/>
            <person name="Kely L."/>
            <person name="Low D.H."/>
            <person name="Jackson T.N."/>
            <person name="Jones A."/>
            <person name="Kurniawan N."/>
            <person name="King G.F."/>
            <person name="Ali S.A."/>
            <person name="Antunes A."/>
            <person name="Ruder T."/>
            <person name="Fry B.G."/>
        </authorList>
    </citation>
    <scope>NUCLEOTIDE SEQUENCE [MRNA]</scope>
    <source>
        <tissue>Venom gland</tissue>
    </source>
</reference>
<comment type="function">
    <text evidence="3">Ion channel inhibitor.</text>
</comment>
<comment type="subcellular location">
    <subcellularLocation>
        <location evidence="1">Secreted</location>
    </subcellularLocation>
</comment>
<comment type="tissue specificity">
    <text>Expressed by the venom gland.</text>
</comment>
<comment type="domain">
    <text evidence="3">The presence of a 'disulfide through disulfide knot' structurally defines this protein as a knottin.</text>
</comment>
<comment type="similarity">
    <text>Belongs to the neurotoxin 03 (Tx2) family. 03 subfamily.</text>
</comment>
<evidence type="ECO:0000250" key="1"/>
<evidence type="ECO:0000255" key="2"/>
<evidence type="ECO:0000305" key="3"/>
<evidence type="ECO:0000312" key="4">
    <source>
        <dbReference type="EMBL" id="JAB84527.1"/>
    </source>
</evidence>
<dbReference type="EMBL" id="GAQE01000027">
    <property type="protein sequence ID" value="JAB84527.1"/>
    <property type="molecule type" value="Transcribed_RNA"/>
</dbReference>
<dbReference type="ArachnoServer" id="AS001565">
    <property type="toxin name" value="U15-barytoxin-Tl1c"/>
</dbReference>
<dbReference type="GO" id="GO:0005576">
    <property type="term" value="C:extracellular region"/>
    <property type="evidence" value="ECO:0007669"/>
    <property type="project" value="UniProtKB-SubCell"/>
</dbReference>
<dbReference type="GO" id="GO:0099106">
    <property type="term" value="F:ion channel regulator activity"/>
    <property type="evidence" value="ECO:0007669"/>
    <property type="project" value="UniProtKB-KW"/>
</dbReference>
<dbReference type="GO" id="GO:0090729">
    <property type="term" value="F:toxin activity"/>
    <property type="evidence" value="ECO:0007669"/>
    <property type="project" value="UniProtKB-KW"/>
</dbReference>
<organism>
    <name type="scientific">Trittame loki</name>
    <name type="common">Brush-footed trapdoor spider</name>
    <dbReference type="NCBI Taxonomy" id="1295018"/>
    <lineage>
        <taxon>Eukaryota</taxon>
        <taxon>Metazoa</taxon>
        <taxon>Ecdysozoa</taxon>
        <taxon>Arthropoda</taxon>
        <taxon>Chelicerata</taxon>
        <taxon>Arachnida</taxon>
        <taxon>Araneae</taxon>
        <taxon>Mygalomorphae</taxon>
        <taxon>Barychelidae</taxon>
        <taxon>Trittame</taxon>
    </lineage>
</organism>
<keyword id="KW-1015">Disulfide bond</keyword>
<keyword id="KW-0872">Ion channel impairing toxin</keyword>
<keyword id="KW-0960">Knottin</keyword>
<keyword id="KW-0964">Secreted</keyword>
<keyword id="KW-0732">Signal</keyword>
<keyword id="KW-0800">Toxin</keyword>
<proteinExistence type="evidence at transcript level"/>